<organism>
    <name type="scientific">Blochmanniella pennsylvanica (strain BPEN)</name>
    <dbReference type="NCBI Taxonomy" id="291272"/>
    <lineage>
        <taxon>Bacteria</taxon>
        <taxon>Pseudomonadati</taxon>
        <taxon>Pseudomonadota</taxon>
        <taxon>Gammaproteobacteria</taxon>
        <taxon>Enterobacterales</taxon>
        <taxon>Enterobacteriaceae</taxon>
        <taxon>ant endosymbionts</taxon>
        <taxon>Candidatus Blochmanniella</taxon>
    </lineage>
</organism>
<gene>
    <name evidence="1" type="primary">ureD</name>
    <name type="ordered locus">BPEN_545</name>
</gene>
<keyword id="KW-0143">Chaperone</keyword>
<keyword id="KW-0963">Cytoplasm</keyword>
<keyword id="KW-0996">Nickel insertion</keyword>
<keyword id="KW-1185">Reference proteome</keyword>
<comment type="function">
    <text evidence="1">Required for maturation of urease via the functional incorporation of the urease nickel metallocenter.</text>
</comment>
<comment type="subunit">
    <text evidence="1">UreD, UreF and UreG form a complex that acts as a GTP-hydrolysis-dependent molecular chaperone, activating the urease apoprotein by helping to assemble the nickel containing metallocenter of UreC. The UreE protein probably delivers the nickel.</text>
</comment>
<comment type="subcellular location">
    <subcellularLocation>
        <location evidence="1">Cytoplasm</location>
    </subcellularLocation>
</comment>
<comment type="similarity">
    <text evidence="1">Belongs to the UreD family.</text>
</comment>
<name>URED_BLOPB</name>
<accession>Q492E6</accession>
<evidence type="ECO:0000255" key="1">
    <source>
        <dbReference type="HAMAP-Rule" id="MF_01384"/>
    </source>
</evidence>
<dbReference type="EMBL" id="CP000016">
    <property type="protein sequence ID" value="AAZ41155.1"/>
    <property type="molecule type" value="Genomic_DNA"/>
</dbReference>
<dbReference type="RefSeq" id="WP_011283066.1">
    <property type="nucleotide sequence ID" value="NC_007292.1"/>
</dbReference>
<dbReference type="SMR" id="Q492E6"/>
<dbReference type="STRING" id="291272.BPEN_545"/>
<dbReference type="KEGG" id="bpn:BPEN_545"/>
<dbReference type="eggNOG" id="COG0829">
    <property type="taxonomic scope" value="Bacteria"/>
</dbReference>
<dbReference type="HOGENOM" id="CLU_056339_0_0_6"/>
<dbReference type="OrthoDB" id="9798842at2"/>
<dbReference type="Proteomes" id="UP000007794">
    <property type="component" value="Chromosome"/>
</dbReference>
<dbReference type="GO" id="GO:0005737">
    <property type="term" value="C:cytoplasm"/>
    <property type="evidence" value="ECO:0007669"/>
    <property type="project" value="UniProtKB-SubCell"/>
</dbReference>
<dbReference type="GO" id="GO:0016151">
    <property type="term" value="F:nickel cation binding"/>
    <property type="evidence" value="ECO:0007669"/>
    <property type="project" value="UniProtKB-UniRule"/>
</dbReference>
<dbReference type="HAMAP" id="MF_01384">
    <property type="entry name" value="UreD"/>
    <property type="match status" value="1"/>
</dbReference>
<dbReference type="InterPro" id="IPR002669">
    <property type="entry name" value="UreD"/>
</dbReference>
<dbReference type="PANTHER" id="PTHR33643">
    <property type="entry name" value="UREASE ACCESSORY PROTEIN D"/>
    <property type="match status" value="1"/>
</dbReference>
<dbReference type="PANTHER" id="PTHR33643:SF1">
    <property type="entry name" value="UREASE ACCESSORY PROTEIN D"/>
    <property type="match status" value="1"/>
</dbReference>
<dbReference type="Pfam" id="PF01774">
    <property type="entry name" value="UreD"/>
    <property type="match status" value="1"/>
</dbReference>
<protein>
    <recommendedName>
        <fullName evidence="1">Urease accessory protein UreD</fullName>
    </recommendedName>
</protein>
<proteinExistence type="inferred from homology"/>
<feature type="chain" id="PRO_0000340413" description="Urease accessory protein UreD">
    <location>
        <begin position="1"/>
        <end position="278"/>
    </location>
</feature>
<reference key="1">
    <citation type="journal article" date="2005" name="Genome Res.">
        <title>Genome sequence of Blochmannia pennsylvanicus indicates parallel evolutionary trends among bacterial mutualists of insects.</title>
        <authorList>
            <person name="Degnan P.H."/>
            <person name="Lazarus A.B."/>
            <person name="Wernegreen J.J."/>
        </authorList>
    </citation>
    <scope>NUCLEOTIDE SEQUENCE [LARGE SCALE GENOMIC DNA]</scope>
    <source>
        <strain>BPEN</strain>
    </source>
</reference>
<sequence>MSDELSQNFIDGWLGELRLNFALRGGRSVLTRCKHVGPFYVKKVFYSENDNTPHVYLLHPPGGLVGGDKLVLDVKLESDSRVLLTTPGAAKFYRSNGLYSEQKHIFRLERNTALEWVPQSSIFFPKSKAKIDTTFIIEQGSRVISFDMLCFGNLSLGSSTYPEEVDIHLNICLSDSIGLQERLRINELNCVMKLGGFRISALLFAVPSDEKTLYKVRKLITSVKHFQVGGATLLDEILVVRLLGNDNQYLKKMLHHIWYTIRPFIIGKKAMLPRIWLT</sequence>